<name>COAA_SHIB3</name>
<feature type="chain" id="PRO_1000099952" description="Pantothenate kinase">
    <location>
        <begin position="1"/>
        <end position="316"/>
    </location>
</feature>
<feature type="binding site" evidence="1">
    <location>
        <begin position="95"/>
        <end position="102"/>
    </location>
    <ligand>
        <name>ATP</name>
        <dbReference type="ChEBI" id="CHEBI:30616"/>
    </ligand>
</feature>
<reference key="1">
    <citation type="submission" date="2008-05" db="EMBL/GenBank/DDBJ databases">
        <title>Complete sequence of Shigella boydii serotype 18 strain BS512.</title>
        <authorList>
            <person name="Rasko D.A."/>
            <person name="Rosovitz M."/>
            <person name="Maurelli A.T."/>
            <person name="Myers G."/>
            <person name="Seshadri R."/>
            <person name="Cer R."/>
            <person name="Jiang L."/>
            <person name="Ravel J."/>
            <person name="Sebastian Y."/>
        </authorList>
    </citation>
    <scope>NUCLEOTIDE SEQUENCE [LARGE SCALE GENOMIC DNA]</scope>
    <source>
        <strain>CDC 3083-94 / BS512</strain>
    </source>
</reference>
<accession>B2TWG4</accession>
<organism>
    <name type="scientific">Shigella boydii serotype 18 (strain CDC 3083-94 / BS512)</name>
    <dbReference type="NCBI Taxonomy" id="344609"/>
    <lineage>
        <taxon>Bacteria</taxon>
        <taxon>Pseudomonadati</taxon>
        <taxon>Pseudomonadota</taxon>
        <taxon>Gammaproteobacteria</taxon>
        <taxon>Enterobacterales</taxon>
        <taxon>Enterobacteriaceae</taxon>
        <taxon>Shigella</taxon>
    </lineage>
</organism>
<dbReference type="EC" id="2.7.1.33" evidence="1"/>
<dbReference type="EMBL" id="CP001063">
    <property type="protein sequence ID" value="ACD09336.1"/>
    <property type="molecule type" value="Genomic_DNA"/>
</dbReference>
<dbReference type="RefSeq" id="WP_000023091.1">
    <property type="nucleotide sequence ID" value="NC_010658.1"/>
</dbReference>
<dbReference type="SMR" id="B2TWG4"/>
<dbReference type="STRING" id="344609.SbBS512_E4462"/>
<dbReference type="KEGG" id="sbc:SbBS512_E4462"/>
<dbReference type="HOGENOM" id="CLU_053818_1_1_6"/>
<dbReference type="UniPathway" id="UPA00241">
    <property type="reaction ID" value="UER00352"/>
</dbReference>
<dbReference type="Proteomes" id="UP000001030">
    <property type="component" value="Chromosome"/>
</dbReference>
<dbReference type="GO" id="GO:0005737">
    <property type="term" value="C:cytoplasm"/>
    <property type="evidence" value="ECO:0007669"/>
    <property type="project" value="UniProtKB-SubCell"/>
</dbReference>
<dbReference type="GO" id="GO:0005524">
    <property type="term" value="F:ATP binding"/>
    <property type="evidence" value="ECO:0007669"/>
    <property type="project" value="UniProtKB-UniRule"/>
</dbReference>
<dbReference type="GO" id="GO:0004594">
    <property type="term" value="F:pantothenate kinase activity"/>
    <property type="evidence" value="ECO:0007669"/>
    <property type="project" value="UniProtKB-UniRule"/>
</dbReference>
<dbReference type="GO" id="GO:0015937">
    <property type="term" value="P:coenzyme A biosynthetic process"/>
    <property type="evidence" value="ECO:0007669"/>
    <property type="project" value="UniProtKB-UniRule"/>
</dbReference>
<dbReference type="CDD" id="cd02025">
    <property type="entry name" value="PanK"/>
    <property type="match status" value="1"/>
</dbReference>
<dbReference type="FunFam" id="3.40.50.300:FF:000242">
    <property type="entry name" value="Pantothenate kinase"/>
    <property type="match status" value="1"/>
</dbReference>
<dbReference type="Gene3D" id="3.40.50.300">
    <property type="entry name" value="P-loop containing nucleotide triphosphate hydrolases"/>
    <property type="match status" value="1"/>
</dbReference>
<dbReference type="HAMAP" id="MF_00215">
    <property type="entry name" value="Pantothen_kinase_1"/>
    <property type="match status" value="1"/>
</dbReference>
<dbReference type="InterPro" id="IPR027417">
    <property type="entry name" value="P-loop_NTPase"/>
</dbReference>
<dbReference type="InterPro" id="IPR004566">
    <property type="entry name" value="PanK"/>
</dbReference>
<dbReference type="InterPro" id="IPR006083">
    <property type="entry name" value="PRK/URK"/>
</dbReference>
<dbReference type="NCBIfam" id="TIGR00554">
    <property type="entry name" value="panK_bact"/>
    <property type="match status" value="1"/>
</dbReference>
<dbReference type="PANTHER" id="PTHR10285">
    <property type="entry name" value="URIDINE KINASE"/>
    <property type="match status" value="1"/>
</dbReference>
<dbReference type="Pfam" id="PF00485">
    <property type="entry name" value="PRK"/>
    <property type="match status" value="1"/>
</dbReference>
<dbReference type="PIRSF" id="PIRSF000545">
    <property type="entry name" value="Pantothenate_kin"/>
    <property type="match status" value="1"/>
</dbReference>
<dbReference type="SUPFAM" id="SSF52540">
    <property type="entry name" value="P-loop containing nucleoside triphosphate hydrolases"/>
    <property type="match status" value="1"/>
</dbReference>
<proteinExistence type="inferred from homology"/>
<gene>
    <name evidence="1" type="primary">coaA</name>
    <name type="ordered locus">SbBS512_E4462</name>
</gene>
<sequence length="316" mass="36375">MSIKEQTLMTPYLQFDRNQWAAQRDSVPMTLSEDEIARLKGINEDLSLEEVAEIYLPLSRLLNFYISSNLRRQAVLEQFLGTNGQRIPYIISIAGSVAVGKSTTARVLQALLSRWPEHRRVELITTDGFLHPNQVLKERGLMKKKGFPESYDMHRLVKFVSDLKSGVPNVTAPVYSHLIYDVIPDGDKTVVQPDILILEGLNVLQSGMDYPHDPHHVFVSDFVDFSIYVDAPEDLLQTWYINRFLKFREGAFTDPDSYFHNYAKLTKEEAIKTAMTLWKEINWLNLKQNILPTRERASLILTKSANHAVEEVRLRK</sequence>
<protein>
    <recommendedName>
        <fullName evidence="1">Pantothenate kinase</fullName>
        <ecNumber evidence="1">2.7.1.33</ecNumber>
    </recommendedName>
    <alternativeName>
        <fullName evidence="1">Pantothenic acid kinase</fullName>
    </alternativeName>
</protein>
<comment type="catalytic activity">
    <reaction evidence="1">
        <text>(R)-pantothenate + ATP = (R)-4'-phosphopantothenate + ADP + H(+)</text>
        <dbReference type="Rhea" id="RHEA:16373"/>
        <dbReference type="ChEBI" id="CHEBI:10986"/>
        <dbReference type="ChEBI" id="CHEBI:15378"/>
        <dbReference type="ChEBI" id="CHEBI:29032"/>
        <dbReference type="ChEBI" id="CHEBI:30616"/>
        <dbReference type="ChEBI" id="CHEBI:456216"/>
        <dbReference type="EC" id="2.7.1.33"/>
    </reaction>
</comment>
<comment type="pathway">
    <text evidence="1">Cofactor biosynthesis; coenzyme A biosynthesis; CoA from (R)-pantothenate: step 1/5.</text>
</comment>
<comment type="subcellular location">
    <subcellularLocation>
        <location evidence="1">Cytoplasm</location>
    </subcellularLocation>
</comment>
<comment type="similarity">
    <text evidence="1">Belongs to the prokaryotic pantothenate kinase family.</text>
</comment>
<keyword id="KW-0067">ATP-binding</keyword>
<keyword id="KW-0173">Coenzyme A biosynthesis</keyword>
<keyword id="KW-0963">Cytoplasm</keyword>
<keyword id="KW-0418">Kinase</keyword>
<keyword id="KW-0547">Nucleotide-binding</keyword>
<keyword id="KW-1185">Reference proteome</keyword>
<keyword id="KW-0808">Transferase</keyword>
<evidence type="ECO:0000255" key="1">
    <source>
        <dbReference type="HAMAP-Rule" id="MF_00215"/>
    </source>
</evidence>